<dbReference type="EMBL" id="AE016814">
    <property type="protein sequence ID" value="AAS50531.1"/>
    <property type="molecule type" value="Genomic_DNA"/>
</dbReference>
<dbReference type="RefSeq" id="NP_982707.1">
    <property type="nucleotide sequence ID" value="NM_208060.1"/>
</dbReference>
<dbReference type="SMR" id="Q75EB3"/>
<dbReference type="FunCoup" id="Q75EB3">
    <property type="interactions" value="138"/>
</dbReference>
<dbReference type="STRING" id="284811.Q75EB3"/>
<dbReference type="EnsemblFungi" id="AAS50531">
    <property type="protein sequence ID" value="AAS50531"/>
    <property type="gene ID" value="AGOS_AAR164C"/>
</dbReference>
<dbReference type="GeneID" id="4618743"/>
<dbReference type="KEGG" id="ago:AGOS_AAR164C"/>
<dbReference type="eggNOG" id="KOG4086">
    <property type="taxonomic scope" value="Eukaryota"/>
</dbReference>
<dbReference type="HOGENOM" id="CLU_147521_0_0_1"/>
<dbReference type="InParanoid" id="Q75EB3"/>
<dbReference type="OMA" id="YLEYWCE"/>
<dbReference type="OrthoDB" id="10257739at2759"/>
<dbReference type="Proteomes" id="UP000000591">
    <property type="component" value="Chromosome I"/>
</dbReference>
<dbReference type="GO" id="GO:0070847">
    <property type="term" value="C:core mediator complex"/>
    <property type="evidence" value="ECO:0000318"/>
    <property type="project" value="GO_Central"/>
</dbReference>
<dbReference type="GO" id="GO:0016592">
    <property type="term" value="C:mediator complex"/>
    <property type="evidence" value="ECO:0000318"/>
    <property type="project" value="GO_Central"/>
</dbReference>
<dbReference type="GO" id="GO:0003713">
    <property type="term" value="F:transcription coactivator activity"/>
    <property type="evidence" value="ECO:0007669"/>
    <property type="project" value="EnsemblFungi"/>
</dbReference>
<dbReference type="GO" id="GO:0006281">
    <property type="term" value="P:DNA repair"/>
    <property type="evidence" value="ECO:0007669"/>
    <property type="project" value="EnsemblFungi"/>
</dbReference>
<dbReference type="GO" id="GO:0006311">
    <property type="term" value="P:meiotic gene conversion"/>
    <property type="evidence" value="ECO:0007669"/>
    <property type="project" value="EnsemblFungi"/>
</dbReference>
<dbReference type="GO" id="GO:0032968">
    <property type="term" value="P:positive regulation of transcription elongation by RNA polymerase II"/>
    <property type="evidence" value="ECO:0007669"/>
    <property type="project" value="EnsemblFungi"/>
</dbReference>
<dbReference type="GO" id="GO:0060261">
    <property type="term" value="P:positive regulation of transcription initiation by RNA polymerase II"/>
    <property type="evidence" value="ECO:0007669"/>
    <property type="project" value="EnsemblFungi"/>
</dbReference>
<dbReference type="GO" id="GO:0006357">
    <property type="term" value="P:regulation of transcription by RNA polymerase II"/>
    <property type="evidence" value="ECO:0000318"/>
    <property type="project" value="GO_Central"/>
</dbReference>
<dbReference type="GO" id="GO:0051123">
    <property type="term" value="P:RNA polymerase II preinitiation complex assembly"/>
    <property type="evidence" value="ECO:0007669"/>
    <property type="project" value="EnsemblFungi"/>
</dbReference>
<dbReference type="Gene3D" id="1.10.10.1340">
    <property type="entry name" value="Mediator of RNA polymerase II, submodule Med31 (Soh1)"/>
    <property type="match status" value="1"/>
</dbReference>
<dbReference type="InterPro" id="IPR038089">
    <property type="entry name" value="Med31_sf"/>
</dbReference>
<dbReference type="InterPro" id="IPR008831">
    <property type="entry name" value="Mediator_Med31"/>
</dbReference>
<dbReference type="PANTHER" id="PTHR13186">
    <property type="entry name" value="MEDIATOR OF RNA POLYMERASE II TRANSCRIPTION SUBUNIT 31"/>
    <property type="match status" value="1"/>
</dbReference>
<dbReference type="Pfam" id="PF05669">
    <property type="entry name" value="Med31"/>
    <property type="match status" value="1"/>
</dbReference>
<feature type="chain" id="PRO_0000305714" description="Mediator of RNA polymerase II transcription subunit 31">
    <location>
        <begin position="1"/>
        <end position="127"/>
    </location>
</feature>
<comment type="function">
    <text evidence="1">Component of the Mediator complex, a coactivator involved in the regulated transcription of nearly all RNA polymerase II-dependent genes. Mediator functions as a bridge to convey information from gene-specific regulatory proteins to the basal RNA polymerase II transcription machinery. Mediator is recruited to promoters by direct interactions with regulatory proteins and serves as a scaffold for the assembly of a functional preinitiation complex with RNA polymerase II and the general transcription factors (By similarity).</text>
</comment>
<comment type="subunit">
    <text evidence="1">Component of the Mediator complex.</text>
</comment>
<comment type="subcellular location">
    <subcellularLocation>
        <location evidence="1">Nucleus</location>
    </subcellularLocation>
</comment>
<comment type="similarity">
    <text evidence="2">Belongs to the Mediator complex subunit 31 family.</text>
</comment>
<proteinExistence type="inferred from homology"/>
<reference key="1">
    <citation type="journal article" date="2004" name="Science">
        <title>The Ashbya gossypii genome as a tool for mapping the ancient Saccharomyces cerevisiae genome.</title>
        <authorList>
            <person name="Dietrich F.S."/>
            <person name="Voegeli S."/>
            <person name="Brachat S."/>
            <person name="Lerch A."/>
            <person name="Gates K."/>
            <person name="Steiner S."/>
            <person name="Mohr C."/>
            <person name="Poehlmann R."/>
            <person name="Luedi P."/>
            <person name="Choi S."/>
            <person name="Wing R.A."/>
            <person name="Flavier A."/>
            <person name="Gaffney T.D."/>
            <person name="Philippsen P."/>
        </authorList>
    </citation>
    <scope>NUCLEOTIDE SEQUENCE [LARGE SCALE GENOMIC DNA]</scope>
    <source>
        <strain>ATCC 10895 / CBS 109.51 / FGSC 9923 / NRRL Y-1056</strain>
    </source>
</reference>
<reference key="2">
    <citation type="journal article" date="2013" name="G3 (Bethesda)">
        <title>Genomes of Ashbya fungi isolated from insects reveal four mating-type loci, numerous translocations, lack of transposons, and distinct gene duplications.</title>
        <authorList>
            <person name="Dietrich F.S."/>
            <person name="Voegeli S."/>
            <person name="Kuo S."/>
            <person name="Philippsen P."/>
        </authorList>
    </citation>
    <scope>GENOME REANNOTATION</scope>
    <source>
        <strain>ATCC 10895 / CBS 109.51 / FGSC 9923 / NRRL Y-1056</strain>
    </source>
</reference>
<protein>
    <recommendedName>
        <fullName>Mediator of RNA polymerase II transcription subunit 31</fullName>
    </recommendedName>
    <alternativeName>
        <fullName>Mediator complex subunit 31</fullName>
    </alternativeName>
</protein>
<name>MED31_EREGS</name>
<organism>
    <name type="scientific">Eremothecium gossypii (strain ATCC 10895 / CBS 109.51 / FGSC 9923 / NRRL Y-1056)</name>
    <name type="common">Yeast</name>
    <name type="synonym">Ashbya gossypii</name>
    <dbReference type="NCBI Taxonomy" id="284811"/>
    <lineage>
        <taxon>Eukaryota</taxon>
        <taxon>Fungi</taxon>
        <taxon>Dikarya</taxon>
        <taxon>Ascomycota</taxon>
        <taxon>Saccharomycotina</taxon>
        <taxon>Saccharomycetes</taxon>
        <taxon>Saccharomycetales</taxon>
        <taxon>Saccharomycetaceae</taxon>
        <taxon>Eremothecium</taxon>
    </lineage>
</organism>
<sequence length="127" mass="14914">MSAKSSEPPFEPSSEGEQLPSRFEVELEFVQSLANIPYVTFLLTQHQIWQDPRFKAYLKYLEYWCEPPYTQFIVYPNCLFVLKLLNSFLDKAVENEDGILEGAEDLPKVIQMQGGEWMNQMVERWRG</sequence>
<evidence type="ECO:0000250" key="1"/>
<evidence type="ECO:0000305" key="2"/>
<keyword id="KW-0010">Activator</keyword>
<keyword id="KW-0539">Nucleus</keyword>
<keyword id="KW-1185">Reference proteome</keyword>
<keyword id="KW-0804">Transcription</keyword>
<keyword id="KW-0805">Transcription regulation</keyword>
<gene>
    <name type="primary">SOH1</name>
    <name type="synonym">MED31</name>
    <name type="ordered locus">AAR164C</name>
</gene>
<accession>Q75EB3</accession>